<reference key="1">
    <citation type="journal article" date="2008" name="Genome Res.">
        <title>Genome sequence of the beta-rhizobium Cupriavidus taiwanensis and comparative genomics of rhizobia.</title>
        <authorList>
            <person name="Amadou C."/>
            <person name="Pascal G."/>
            <person name="Mangenot S."/>
            <person name="Glew M."/>
            <person name="Bontemps C."/>
            <person name="Capela D."/>
            <person name="Carrere S."/>
            <person name="Cruveiller S."/>
            <person name="Dossat C."/>
            <person name="Lajus A."/>
            <person name="Marchetti M."/>
            <person name="Poinsot V."/>
            <person name="Rouy Z."/>
            <person name="Servin B."/>
            <person name="Saad M."/>
            <person name="Schenowitz C."/>
            <person name="Barbe V."/>
            <person name="Batut J."/>
            <person name="Medigue C."/>
            <person name="Masson-Boivin C."/>
        </authorList>
    </citation>
    <scope>NUCLEOTIDE SEQUENCE [LARGE SCALE GENOMIC DNA]</scope>
    <source>
        <strain>DSM 17343 / BCRC 17206 / CCUG 44338 / CIP 107171 / LMG 19424 / R1</strain>
    </source>
</reference>
<keyword id="KW-0067">ATP-binding</keyword>
<keyword id="KW-0436">Ligase</keyword>
<keyword id="KW-0547">Nucleotide-binding</keyword>
<keyword id="KW-0648">Protein biosynthesis</keyword>
<protein>
    <recommendedName>
        <fullName evidence="1">Aspartyl/glutamyl-tRNA(Asn/Gln) amidotransferase subunit B</fullName>
        <shortName evidence="1">Asp/Glu-ADT subunit B</shortName>
        <ecNumber evidence="1">6.3.5.-</ecNumber>
    </recommendedName>
</protein>
<proteinExistence type="inferred from homology"/>
<accession>B2AG22</accession>
<name>GATB_CUPTR</name>
<gene>
    <name evidence="1" type="primary">gatB</name>
    <name type="ordered locus">RALTA_A0048</name>
</gene>
<comment type="function">
    <text evidence="1">Allows the formation of correctly charged Asn-tRNA(Asn) or Gln-tRNA(Gln) through the transamidation of misacylated Asp-tRNA(Asn) or Glu-tRNA(Gln) in organisms which lack either or both of asparaginyl-tRNA or glutaminyl-tRNA synthetases. The reaction takes place in the presence of glutamine and ATP through an activated phospho-Asp-tRNA(Asn) or phospho-Glu-tRNA(Gln).</text>
</comment>
<comment type="catalytic activity">
    <reaction evidence="1">
        <text>L-glutamyl-tRNA(Gln) + L-glutamine + ATP + H2O = L-glutaminyl-tRNA(Gln) + L-glutamate + ADP + phosphate + H(+)</text>
        <dbReference type="Rhea" id="RHEA:17521"/>
        <dbReference type="Rhea" id="RHEA-COMP:9681"/>
        <dbReference type="Rhea" id="RHEA-COMP:9684"/>
        <dbReference type="ChEBI" id="CHEBI:15377"/>
        <dbReference type="ChEBI" id="CHEBI:15378"/>
        <dbReference type="ChEBI" id="CHEBI:29985"/>
        <dbReference type="ChEBI" id="CHEBI:30616"/>
        <dbReference type="ChEBI" id="CHEBI:43474"/>
        <dbReference type="ChEBI" id="CHEBI:58359"/>
        <dbReference type="ChEBI" id="CHEBI:78520"/>
        <dbReference type="ChEBI" id="CHEBI:78521"/>
        <dbReference type="ChEBI" id="CHEBI:456216"/>
    </reaction>
</comment>
<comment type="catalytic activity">
    <reaction evidence="1">
        <text>L-aspartyl-tRNA(Asn) + L-glutamine + ATP + H2O = L-asparaginyl-tRNA(Asn) + L-glutamate + ADP + phosphate + 2 H(+)</text>
        <dbReference type="Rhea" id="RHEA:14513"/>
        <dbReference type="Rhea" id="RHEA-COMP:9674"/>
        <dbReference type="Rhea" id="RHEA-COMP:9677"/>
        <dbReference type="ChEBI" id="CHEBI:15377"/>
        <dbReference type="ChEBI" id="CHEBI:15378"/>
        <dbReference type="ChEBI" id="CHEBI:29985"/>
        <dbReference type="ChEBI" id="CHEBI:30616"/>
        <dbReference type="ChEBI" id="CHEBI:43474"/>
        <dbReference type="ChEBI" id="CHEBI:58359"/>
        <dbReference type="ChEBI" id="CHEBI:78515"/>
        <dbReference type="ChEBI" id="CHEBI:78516"/>
        <dbReference type="ChEBI" id="CHEBI:456216"/>
    </reaction>
</comment>
<comment type="subunit">
    <text evidence="1">Heterotrimer of A, B and C subunits.</text>
</comment>
<comment type="similarity">
    <text evidence="1">Belongs to the GatB/GatE family. GatB subfamily.</text>
</comment>
<organism>
    <name type="scientific">Cupriavidus taiwanensis (strain DSM 17343 / BCRC 17206 / CCUG 44338 / CIP 107171 / LMG 19424 / R1)</name>
    <name type="common">Ralstonia taiwanensis (strain LMG 19424)</name>
    <dbReference type="NCBI Taxonomy" id="977880"/>
    <lineage>
        <taxon>Bacteria</taxon>
        <taxon>Pseudomonadati</taxon>
        <taxon>Pseudomonadota</taxon>
        <taxon>Betaproteobacteria</taxon>
        <taxon>Burkholderiales</taxon>
        <taxon>Burkholderiaceae</taxon>
        <taxon>Cupriavidus</taxon>
    </lineage>
</organism>
<sequence>MQWEVVIGLETHAQLSTASKIFSGTSTAFGAEANTQASPVDLALPGVLPVLNQGAVERAIQFGLAIGATIAPRSIFARKNYFYPDLPKGYQISQYEIPVVQGGTITIQVEGRKGEFYEKTVNLTRAHLEEDAGKSLHEDFAGMTGIDLNRAGTPLLEIVTEPDMRSAAEAVAYAKALHSLVVWLGICDGNMQEGSFRCDANVSVRPVGQKEFGTRREIKNLNSFRFLQQAIEYEVQWQIAEIEDGRKIQQATVLFDPDTGETRAMRTKEDAHDYRYFPDPDLMPLEIEPAWVERVRDALPELPAAMQARFVSQYGLSAYDATTLTATKAFAAYYEAVVADAGAANAKPAANWLMGDVSSQLNREGIAIDDAPVRPAQLAKLLARIADGTVSNNTAKKDVFPAMWAGEHDGDADAIIAAKGLKQMSDSGELEKIIDDVLAANAKSVEEFRSGKEKAFNALVGQAMKATRGKANPAQVNELLRKKLG</sequence>
<feature type="chain" id="PRO_1000095208" description="Aspartyl/glutamyl-tRNA(Asn/Gln) amidotransferase subunit B">
    <location>
        <begin position="1"/>
        <end position="485"/>
    </location>
</feature>
<dbReference type="EC" id="6.3.5.-" evidence="1"/>
<dbReference type="EMBL" id="CU633749">
    <property type="protein sequence ID" value="CAP62721.1"/>
    <property type="molecule type" value="Genomic_DNA"/>
</dbReference>
<dbReference type="RefSeq" id="WP_012351391.1">
    <property type="nucleotide sequence ID" value="NC_010528.1"/>
</dbReference>
<dbReference type="SMR" id="B2AG22"/>
<dbReference type="GeneID" id="29761355"/>
<dbReference type="KEGG" id="cti:RALTA_A0048"/>
<dbReference type="eggNOG" id="COG0064">
    <property type="taxonomic scope" value="Bacteria"/>
</dbReference>
<dbReference type="HOGENOM" id="CLU_019240_0_0_4"/>
<dbReference type="BioCyc" id="CTAI977880:RALTA_RS00240-MONOMER"/>
<dbReference type="Proteomes" id="UP000001692">
    <property type="component" value="Chromosome 1"/>
</dbReference>
<dbReference type="GO" id="GO:0050566">
    <property type="term" value="F:asparaginyl-tRNA synthase (glutamine-hydrolyzing) activity"/>
    <property type="evidence" value="ECO:0007669"/>
    <property type="project" value="RHEA"/>
</dbReference>
<dbReference type="GO" id="GO:0005524">
    <property type="term" value="F:ATP binding"/>
    <property type="evidence" value="ECO:0007669"/>
    <property type="project" value="UniProtKB-KW"/>
</dbReference>
<dbReference type="GO" id="GO:0050567">
    <property type="term" value="F:glutaminyl-tRNA synthase (glutamine-hydrolyzing) activity"/>
    <property type="evidence" value="ECO:0007669"/>
    <property type="project" value="UniProtKB-UniRule"/>
</dbReference>
<dbReference type="GO" id="GO:0070681">
    <property type="term" value="P:glutaminyl-tRNAGln biosynthesis via transamidation"/>
    <property type="evidence" value="ECO:0007669"/>
    <property type="project" value="TreeGrafter"/>
</dbReference>
<dbReference type="GO" id="GO:0006412">
    <property type="term" value="P:translation"/>
    <property type="evidence" value="ECO:0007669"/>
    <property type="project" value="UniProtKB-UniRule"/>
</dbReference>
<dbReference type="FunFam" id="1.10.10.410:FF:000001">
    <property type="entry name" value="Aspartyl/glutamyl-tRNA(Asn/Gln) amidotransferase subunit B"/>
    <property type="match status" value="1"/>
</dbReference>
<dbReference type="FunFam" id="1.10.150.380:FF:000001">
    <property type="entry name" value="Aspartyl/glutamyl-tRNA(Asn/Gln) amidotransferase subunit B"/>
    <property type="match status" value="1"/>
</dbReference>
<dbReference type="Gene3D" id="1.10.10.410">
    <property type="match status" value="1"/>
</dbReference>
<dbReference type="Gene3D" id="1.10.150.380">
    <property type="entry name" value="GatB domain, N-terminal subdomain"/>
    <property type="match status" value="1"/>
</dbReference>
<dbReference type="HAMAP" id="MF_00121">
    <property type="entry name" value="GatB"/>
    <property type="match status" value="1"/>
</dbReference>
<dbReference type="InterPro" id="IPR017959">
    <property type="entry name" value="Asn/Gln-tRNA_amidoTrfase_suB/E"/>
</dbReference>
<dbReference type="InterPro" id="IPR006075">
    <property type="entry name" value="Asn/Gln-tRNA_Trfase_suB/E_cat"/>
</dbReference>
<dbReference type="InterPro" id="IPR018027">
    <property type="entry name" value="Asn/Gln_amidotransferase"/>
</dbReference>
<dbReference type="InterPro" id="IPR003789">
    <property type="entry name" value="Asn/Gln_tRNA_amidoTrase-B-like"/>
</dbReference>
<dbReference type="InterPro" id="IPR004413">
    <property type="entry name" value="GatB"/>
</dbReference>
<dbReference type="InterPro" id="IPR042114">
    <property type="entry name" value="GatB_C_1"/>
</dbReference>
<dbReference type="InterPro" id="IPR023168">
    <property type="entry name" value="GatB_Yqey_C_2"/>
</dbReference>
<dbReference type="InterPro" id="IPR017958">
    <property type="entry name" value="Gln-tRNA_amidoTrfase_suB_CS"/>
</dbReference>
<dbReference type="InterPro" id="IPR014746">
    <property type="entry name" value="Gln_synth/guanido_kin_cat_dom"/>
</dbReference>
<dbReference type="NCBIfam" id="TIGR00133">
    <property type="entry name" value="gatB"/>
    <property type="match status" value="1"/>
</dbReference>
<dbReference type="NCBIfam" id="NF004012">
    <property type="entry name" value="PRK05477.1-2"/>
    <property type="match status" value="1"/>
</dbReference>
<dbReference type="NCBIfam" id="NF004014">
    <property type="entry name" value="PRK05477.1-4"/>
    <property type="match status" value="1"/>
</dbReference>
<dbReference type="NCBIfam" id="NF004015">
    <property type="entry name" value="PRK05477.1-5"/>
    <property type="match status" value="1"/>
</dbReference>
<dbReference type="PANTHER" id="PTHR11659">
    <property type="entry name" value="GLUTAMYL-TRNA GLN AMIDOTRANSFERASE SUBUNIT B MITOCHONDRIAL AND PROKARYOTIC PET112-RELATED"/>
    <property type="match status" value="1"/>
</dbReference>
<dbReference type="PANTHER" id="PTHR11659:SF0">
    <property type="entry name" value="GLUTAMYL-TRNA(GLN) AMIDOTRANSFERASE SUBUNIT B, MITOCHONDRIAL"/>
    <property type="match status" value="1"/>
</dbReference>
<dbReference type="Pfam" id="PF02934">
    <property type="entry name" value="GatB_N"/>
    <property type="match status" value="1"/>
</dbReference>
<dbReference type="Pfam" id="PF02637">
    <property type="entry name" value="GatB_Yqey"/>
    <property type="match status" value="1"/>
</dbReference>
<dbReference type="SMART" id="SM00845">
    <property type="entry name" value="GatB_Yqey"/>
    <property type="match status" value="1"/>
</dbReference>
<dbReference type="SUPFAM" id="SSF89095">
    <property type="entry name" value="GatB/YqeY motif"/>
    <property type="match status" value="1"/>
</dbReference>
<dbReference type="SUPFAM" id="SSF55931">
    <property type="entry name" value="Glutamine synthetase/guanido kinase"/>
    <property type="match status" value="1"/>
</dbReference>
<dbReference type="PROSITE" id="PS01234">
    <property type="entry name" value="GATB"/>
    <property type="match status" value="1"/>
</dbReference>
<evidence type="ECO:0000255" key="1">
    <source>
        <dbReference type="HAMAP-Rule" id="MF_00121"/>
    </source>
</evidence>